<comment type="similarity">
    <text evidence="1">Belongs to the SDO1/SBDS family.</text>
</comment>
<keyword id="KW-1185">Reference proteome</keyword>
<name>SDO1_METJA</name>
<dbReference type="EMBL" id="L77117">
    <property type="protein sequence ID" value="AAB98586.1"/>
    <property type="molecule type" value="Genomic_DNA"/>
</dbReference>
<dbReference type="PIR" id="H64373">
    <property type="entry name" value="H64373"/>
</dbReference>
<dbReference type="SMR" id="Q58011"/>
<dbReference type="FunCoup" id="Q58011">
    <property type="interactions" value="134"/>
</dbReference>
<dbReference type="STRING" id="243232.MJ_0592"/>
<dbReference type="PaxDb" id="243232-MJ_0592"/>
<dbReference type="EnsemblBacteria" id="AAB98586">
    <property type="protein sequence ID" value="AAB98586"/>
    <property type="gene ID" value="MJ_0592"/>
</dbReference>
<dbReference type="KEGG" id="mja:MJ_0592"/>
<dbReference type="eggNOG" id="arCOG04187">
    <property type="taxonomic scope" value="Archaea"/>
</dbReference>
<dbReference type="HOGENOM" id="CLU_043216_2_0_2"/>
<dbReference type="InParanoid" id="Q58011"/>
<dbReference type="PhylomeDB" id="Q58011"/>
<dbReference type="Proteomes" id="UP000000805">
    <property type="component" value="Chromosome"/>
</dbReference>
<dbReference type="GO" id="GO:0042256">
    <property type="term" value="P:cytosolic ribosome assembly"/>
    <property type="evidence" value="ECO:0007669"/>
    <property type="project" value="InterPro"/>
</dbReference>
<dbReference type="Gene3D" id="3.30.70.240">
    <property type="match status" value="1"/>
</dbReference>
<dbReference type="Gene3D" id="3.30.1250.10">
    <property type="entry name" value="Ribosome maturation protein SBDS, N-terminal domain"/>
    <property type="match status" value="1"/>
</dbReference>
<dbReference type="Gene3D" id="1.10.10.900">
    <property type="entry name" value="SBDS protein C-terminal domain, subdomain 1"/>
    <property type="match status" value="1"/>
</dbReference>
<dbReference type="InterPro" id="IPR035647">
    <property type="entry name" value="EFG_III/V"/>
</dbReference>
<dbReference type="InterPro" id="IPR018023">
    <property type="entry name" value="Ribosome_mat_SBDS_CS"/>
</dbReference>
<dbReference type="InterPro" id="IPR036786">
    <property type="entry name" value="Ribosome_mat_SBDS_N_sf"/>
</dbReference>
<dbReference type="InterPro" id="IPR002140">
    <property type="entry name" value="Sdo1/SBDS"/>
</dbReference>
<dbReference type="InterPro" id="IPR039100">
    <property type="entry name" value="Sdo1/SBDS-like"/>
</dbReference>
<dbReference type="InterPro" id="IPR046928">
    <property type="entry name" value="SDO1/SBDS_C"/>
</dbReference>
<dbReference type="InterPro" id="IPR018978">
    <property type="entry name" value="SDO1/SBDS_central"/>
</dbReference>
<dbReference type="InterPro" id="IPR037188">
    <property type="entry name" value="Sdo1/SBDS_central_sf"/>
</dbReference>
<dbReference type="InterPro" id="IPR019783">
    <property type="entry name" value="SDO1/SBDS_N"/>
</dbReference>
<dbReference type="NCBIfam" id="TIGR00291">
    <property type="entry name" value="RNA_SBDS"/>
    <property type="match status" value="1"/>
</dbReference>
<dbReference type="PANTHER" id="PTHR10927">
    <property type="entry name" value="RIBOSOME MATURATION PROTEIN SBDS"/>
    <property type="match status" value="1"/>
</dbReference>
<dbReference type="PANTHER" id="PTHR10927:SF4">
    <property type="entry name" value="RIBOSOME MATURATION PROTEIN SDO1 HOMOLOG"/>
    <property type="match status" value="1"/>
</dbReference>
<dbReference type="Pfam" id="PF20268">
    <property type="entry name" value="SBDS_C"/>
    <property type="match status" value="1"/>
</dbReference>
<dbReference type="Pfam" id="PF09377">
    <property type="entry name" value="SBDS_domain_II"/>
    <property type="match status" value="1"/>
</dbReference>
<dbReference type="Pfam" id="PF01172">
    <property type="entry name" value="SBDS_N"/>
    <property type="match status" value="1"/>
</dbReference>
<dbReference type="SUPFAM" id="SSF54980">
    <property type="entry name" value="EF-G C-terminal domain-like"/>
    <property type="match status" value="1"/>
</dbReference>
<dbReference type="SUPFAM" id="SSF89895">
    <property type="entry name" value="FYSH domain"/>
    <property type="match status" value="1"/>
</dbReference>
<dbReference type="SUPFAM" id="SSF109728">
    <property type="entry name" value="Hypothetical protein AF0491, middle domain"/>
    <property type="match status" value="1"/>
</dbReference>
<dbReference type="PROSITE" id="PS01267">
    <property type="entry name" value="UPF0023"/>
    <property type="match status" value="1"/>
</dbReference>
<proteinExistence type="inferred from homology"/>
<reference key="1">
    <citation type="journal article" date="1996" name="Science">
        <title>Complete genome sequence of the methanogenic archaeon, Methanococcus jannaschii.</title>
        <authorList>
            <person name="Bult C.J."/>
            <person name="White O."/>
            <person name="Olsen G.J."/>
            <person name="Zhou L."/>
            <person name="Fleischmann R.D."/>
            <person name="Sutton G.G."/>
            <person name="Blake J.A."/>
            <person name="FitzGerald L.M."/>
            <person name="Clayton R.A."/>
            <person name="Gocayne J.D."/>
            <person name="Kerlavage A.R."/>
            <person name="Dougherty B.A."/>
            <person name="Tomb J.-F."/>
            <person name="Adams M.D."/>
            <person name="Reich C.I."/>
            <person name="Overbeek R."/>
            <person name="Kirkness E.F."/>
            <person name="Weinstock K.G."/>
            <person name="Merrick J.M."/>
            <person name="Glodek A."/>
            <person name="Scott J.L."/>
            <person name="Geoghagen N.S.M."/>
            <person name="Weidman J.F."/>
            <person name="Fuhrmann J.L."/>
            <person name="Nguyen D."/>
            <person name="Utterback T.R."/>
            <person name="Kelley J.M."/>
            <person name="Peterson J.D."/>
            <person name="Sadow P.W."/>
            <person name="Hanna M.C."/>
            <person name="Cotton M.D."/>
            <person name="Roberts K.M."/>
            <person name="Hurst M.A."/>
            <person name="Kaine B.P."/>
            <person name="Borodovsky M."/>
            <person name="Klenk H.-P."/>
            <person name="Fraser C.M."/>
            <person name="Smith H.O."/>
            <person name="Woese C.R."/>
            <person name="Venter J.C."/>
        </authorList>
    </citation>
    <scope>NUCLEOTIDE SEQUENCE [LARGE SCALE GENOMIC DNA]</scope>
    <source>
        <strain>ATCC 43067 / DSM 2661 / JAL-1 / JCM 10045 / NBRC 100440</strain>
    </source>
</reference>
<feature type="chain" id="PRO_0000123769" description="Ribosome maturation protein SDO1 homolog">
    <location>
        <begin position="1"/>
        <end position="240"/>
    </location>
</feature>
<accession>Q58011</accession>
<protein>
    <recommendedName>
        <fullName>Ribosome maturation protein SDO1 homolog</fullName>
    </recommendedName>
</protein>
<sequence length="240" mass="27411">MGRDIMVSLEEAVIARYTSHGEKFEILVDPYLAAKLKEGQNVDFDELLAIEVVFRDASKGEKAPEELLSKIFGTTDVKEIAKKIILKGQVQLTAKQREEIREQKKRQIITIISRNTINPQTDTPHPPHRIEKAMEELRINIDIYKSAEEQVPEIVKKLKKVLPIRFEKRDIAVKIPAEFASKAYNALYQFGAVKQEEWQPDGSLIVLIEIPSGIEAEFYAHLNKITKGNVQTKVVKKYSE</sequence>
<evidence type="ECO:0000305" key="1"/>
<organism>
    <name type="scientific">Methanocaldococcus jannaschii (strain ATCC 43067 / DSM 2661 / JAL-1 / JCM 10045 / NBRC 100440)</name>
    <name type="common">Methanococcus jannaschii</name>
    <dbReference type="NCBI Taxonomy" id="243232"/>
    <lineage>
        <taxon>Archaea</taxon>
        <taxon>Methanobacteriati</taxon>
        <taxon>Methanobacteriota</taxon>
        <taxon>Methanomada group</taxon>
        <taxon>Methanococci</taxon>
        <taxon>Methanococcales</taxon>
        <taxon>Methanocaldococcaceae</taxon>
        <taxon>Methanocaldococcus</taxon>
    </lineage>
</organism>
<gene>
    <name type="ordered locus">MJ0592</name>
</gene>